<dbReference type="EC" id="5.3.1.16" evidence="1"/>
<dbReference type="EMBL" id="CP000031">
    <property type="protein sequence ID" value="AAV94457.1"/>
    <property type="molecule type" value="Genomic_DNA"/>
</dbReference>
<dbReference type="RefSeq" id="WP_011046904.1">
    <property type="nucleotide sequence ID" value="NC_003911.12"/>
</dbReference>
<dbReference type="SMR" id="Q5LU97"/>
<dbReference type="STRING" id="246200.SPO1158"/>
<dbReference type="PaxDb" id="246200-SPO1158"/>
<dbReference type="KEGG" id="sil:SPO1158"/>
<dbReference type="eggNOG" id="COG0106">
    <property type="taxonomic scope" value="Bacteria"/>
</dbReference>
<dbReference type="HOGENOM" id="CLU_048577_1_1_5"/>
<dbReference type="OrthoDB" id="9807749at2"/>
<dbReference type="UniPathway" id="UPA00031">
    <property type="reaction ID" value="UER00009"/>
</dbReference>
<dbReference type="Proteomes" id="UP000001023">
    <property type="component" value="Chromosome"/>
</dbReference>
<dbReference type="GO" id="GO:0005737">
    <property type="term" value="C:cytoplasm"/>
    <property type="evidence" value="ECO:0007669"/>
    <property type="project" value="UniProtKB-SubCell"/>
</dbReference>
<dbReference type="GO" id="GO:0003949">
    <property type="term" value="F:1-(5-phosphoribosyl)-5-[(5-phosphoribosylamino)methylideneamino]imidazole-4-carboxamide isomerase activity"/>
    <property type="evidence" value="ECO:0007669"/>
    <property type="project" value="UniProtKB-UniRule"/>
</dbReference>
<dbReference type="GO" id="GO:0000105">
    <property type="term" value="P:L-histidine biosynthetic process"/>
    <property type="evidence" value="ECO:0007669"/>
    <property type="project" value="UniProtKB-UniRule"/>
</dbReference>
<dbReference type="GO" id="GO:0000162">
    <property type="term" value="P:L-tryptophan biosynthetic process"/>
    <property type="evidence" value="ECO:0007669"/>
    <property type="project" value="TreeGrafter"/>
</dbReference>
<dbReference type="CDD" id="cd04732">
    <property type="entry name" value="HisA"/>
    <property type="match status" value="1"/>
</dbReference>
<dbReference type="FunFam" id="3.20.20.70:FF:000009">
    <property type="entry name" value="1-(5-phosphoribosyl)-5-[(5-phosphoribosylamino)methylideneamino] imidazole-4-carboxamide isomerase"/>
    <property type="match status" value="1"/>
</dbReference>
<dbReference type="Gene3D" id="3.20.20.70">
    <property type="entry name" value="Aldolase class I"/>
    <property type="match status" value="1"/>
</dbReference>
<dbReference type="HAMAP" id="MF_01014">
    <property type="entry name" value="HisA"/>
    <property type="match status" value="1"/>
</dbReference>
<dbReference type="InterPro" id="IPR013785">
    <property type="entry name" value="Aldolase_TIM"/>
</dbReference>
<dbReference type="InterPro" id="IPR006062">
    <property type="entry name" value="His_biosynth"/>
</dbReference>
<dbReference type="InterPro" id="IPR006063">
    <property type="entry name" value="HisA_bact_arch"/>
</dbReference>
<dbReference type="InterPro" id="IPR044524">
    <property type="entry name" value="Isoase_HisA-like"/>
</dbReference>
<dbReference type="InterPro" id="IPR023016">
    <property type="entry name" value="Isoase_HisA-like_bact"/>
</dbReference>
<dbReference type="InterPro" id="IPR011060">
    <property type="entry name" value="RibuloseP-bd_barrel"/>
</dbReference>
<dbReference type="NCBIfam" id="TIGR00007">
    <property type="entry name" value="1-(5-phosphoribosyl)-5-[(5-phosphoribosylamino)methylideneamino]imidazole-4-carboxamide isomerase"/>
    <property type="match status" value="1"/>
</dbReference>
<dbReference type="NCBIfam" id="NF010112">
    <property type="entry name" value="PRK13585.1"/>
    <property type="match status" value="1"/>
</dbReference>
<dbReference type="PANTHER" id="PTHR43090">
    <property type="entry name" value="1-(5-PHOSPHORIBOSYL)-5-[(5-PHOSPHORIBOSYLAMINO)METHYLIDENEAMINO] IMIDAZOLE-4-CARBOXAMIDE ISOMERASE"/>
    <property type="match status" value="1"/>
</dbReference>
<dbReference type="PANTHER" id="PTHR43090:SF2">
    <property type="entry name" value="1-(5-PHOSPHORIBOSYL)-5-[(5-PHOSPHORIBOSYLAMINO)METHYLIDENEAMINO] IMIDAZOLE-4-CARBOXAMIDE ISOMERASE"/>
    <property type="match status" value="1"/>
</dbReference>
<dbReference type="Pfam" id="PF00977">
    <property type="entry name" value="His_biosynth"/>
    <property type="match status" value="1"/>
</dbReference>
<dbReference type="SUPFAM" id="SSF51366">
    <property type="entry name" value="Ribulose-phoshate binding barrel"/>
    <property type="match status" value="1"/>
</dbReference>
<organism>
    <name type="scientific">Ruegeria pomeroyi (strain ATCC 700808 / DSM 15171 / DSS-3)</name>
    <name type="common">Silicibacter pomeroyi</name>
    <dbReference type="NCBI Taxonomy" id="246200"/>
    <lineage>
        <taxon>Bacteria</taxon>
        <taxon>Pseudomonadati</taxon>
        <taxon>Pseudomonadota</taxon>
        <taxon>Alphaproteobacteria</taxon>
        <taxon>Rhodobacterales</taxon>
        <taxon>Roseobacteraceae</taxon>
        <taxon>Ruegeria</taxon>
    </lineage>
</organism>
<proteinExistence type="inferred from homology"/>
<evidence type="ECO:0000255" key="1">
    <source>
        <dbReference type="HAMAP-Rule" id="MF_01014"/>
    </source>
</evidence>
<comment type="catalytic activity">
    <reaction evidence="1">
        <text>1-(5-phospho-beta-D-ribosyl)-5-[(5-phospho-beta-D-ribosylamino)methylideneamino]imidazole-4-carboxamide = 5-[(5-phospho-1-deoxy-D-ribulos-1-ylimino)methylamino]-1-(5-phospho-beta-D-ribosyl)imidazole-4-carboxamide</text>
        <dbReference type="Rhea" id="RHEA:15469"/>
        <dbReference type="ChEBI" id="CHEBI:58435"/>
        <dbReference type="ChEBI" id="CHEBI:58525"/>
        <dbReference type="EC" id="5.3.1.16"/>
    </reaction>
</comment>
<comment type="pathway">
    <text evidence="1">Amino-acid biosynthesis; L-histidine biosynthesis; L-histidine from 5-phospho-alpha-D-ribose 1-diphosphate: step 4/9.</text>
</comment>
<comment type="subcellular location">
    <subcellularLocation>
        <location evidence="1">Cytoplasm</location>
    </subcellularLocation>
</comment>
<comment type="similarity">
    <text evidence="1">Belongs to the HisA/HisF family.</text>
</comment>
<gene>
    <name evidence="1" type="primary">hisA1</name>
    <name type="ordered locus">SPO1158</name>
</gene>
<reference key="1">
    <citation type="journal article" date="2004" name="Nature">
        <title>Genome sequence of Silicibacter pomeroyi reveals adaptations to the marine environment.</title>
        <authorList>
            <person name="Moran M.A."/>
            <person name="Buchan A."/>
            <person name="Gonzalez J.M."/>
            <person name="Heidelberg J.F."/>
            <person name="Whitman W.B."/>
            <person name="Kiene R.P."/>
            <person name="Henriksen J.R."/>
            <person name="King G.M."/>
            <person name="Belas R."/>
            <person name="Fuqua C."/>
            <person name="Brinkac L.M."/>
            <person name="Lewis M."/>
            <person name="Johri S."/>
            <person name="Weaver B."/>
            <person name="Pai G."/>
            <person name="Eisen J.A."/>
            <person name="Rahe E."/>
            <person name="Sheldon W.M."/>
            <person name="Ye W."/>
            <person name="Miller T.R."/>
            <person name="Carlton J."/>
            <person name="Rasko D.A."/>
            <person name="Paulsen I.T."/>
            <person name="Ren Q."/>
            <person name="Daugherty S.C."/>
            <person name="DeBoy R.T."/>
            <person name="Dodson R.J."/>
            <person name="Durkin A.S."/>
            <person name="Madupu R."/>
            <person name="Nelson W.C."/>
            <person name="Sullivan S.A."/>
            <person name="Rosovitz M.J."/>
            <person name="Haft D.H."/>
            <person name="Selengut J."/>
            <person name="Ward N."/>
        </authorList>
    </citation>
    <scope>NUCLEOTIDE SEQUENCE [LARGE SCALE GENOMIC DNA]</scope>
    <source>
        <strain>ATCC 700808 / DSM 15171 / DSS-3</strain>
    </source>
</reference>
<reference key="2">
    <citation type="journal article" date="2014" name="Stand. Genomic Sci.">
        <title>An updated genome annotation for the model marine bacterium Ruegeria pomeroyi DSS-3.</title>
        <authorList>
            <person name="Rivers A.R."/>
            <person name="Smith C.B."/>
            <person name="Moran M.A."/>
        </authorList>
    </citation>
    <scope>GENOME REANNOTATION</scope>
    <source>
        <strain>ATCC 700808 / DSM 15171 / DSS-3</strain>
    </source>
</reference>
<feature type="chain" id="PRO_0000229084" description="1-(5-phosphoribosyl)-5-[(5-phosphoribosylamino)methylideneamino] imidazole-4-carboxamide isomerase 1">
    <location>
        <begin position="1"/>
        <end position="240"/>
    </location>
</feature>
<feature type="active site" description="Proton acceptor" evidence="1">
    <location>
        <position position="8"/>
    </location>
</feature>
<feature type="active site" description="Proton donor" evidence="1">
    <location>
        <position position="129"/>
    </location>
</feature>
<keyword id="KW-0028">Amino-acid biosynthesis</keyword>
<keyword id="KW-0963">Cytoplasm</keyword>
<keyword id="KW-0368">Histidine biosynthesis</keyword>
<keyword id="KW-0413">Isomerase</keyword>
<keyword id="KW-1185">Reference proteome</keyword>
<name>HIS41_RUEPO</name>
<protein>
    <recommendedName>
        <fullName evidence="1">1-(5-phosphoribosyl)-5-[(5-phosphoribosylamino)methylideneamino] imidazole-4-carboxamide isomerase 1</fullName>
        <ecNumber evidence="1">5.3.1.16</ecNumber>
    </recommendedName>
    <alternativeName>
        <fullName evidence="1">Phosphoribosylformimino-5-aminoimidazole carboxamide ribotide isomerase 1</fullName>
    </alternativeName>
</protein>
<sequence length="240" mass="25000">MILYPAIDLKDGQAVRLVHGEMDQATVFNDNPAAQALEFVAAGCEWLHLVDLNGAFAGEPVNAAPVEAILEQCKVPAQLGGGIRDMATIERWLDKGLARVILGTVAVENPDLVREAARAFPGKVAVGIDARNGRVATKGWAEETDVMVTDLAKSFEDAGVAAIIYTDILRDGAMKGPNIKATADLARAVSIPVIASGGVSSLEDLIALRDCGASLNGAISGRALYDGALDLKQALAALKG</sequence>
<accession>Q5LU97</accession>